<reference key="1">
    <citation type="submission" date="2007-07" db="EMBL/GenBank/DDBJ databases">
        <title>Complete genome sequence of Campylobacter hominis ATCC BAA-381, a commensal isolated from the human gastrointestinal tract.</title>
        <authorList>
            <person name="Fouts D.E."/>
            <person name="Mongodin E.F."/>
            <person name="Puiu D."/>
            <person name="Sebastian Y."/>
            <person name="Miller W.G."/>
            <person name="Mandrell R.E."/>
            <person name="Nelson K.E."/>
        </authorList>
    </citation>
    <scope>NUCLEOTIDE SEQUENCE [LARGE SCALE GENOMIC DNA]</scope>
    <source>
        <strain>ATCC BAA-381 / DSM 21671 / CCUG 45161 / LMG 19568 / NCTC 13146 / CH001A</strain>
    </source>
</reference>
<keyword id="KW-0131">Cell cycle</keyword>
<keyword id="KW-0132">Cell division</keyword>
<keyword id="KW-0143">Chaperone</keyword>
<keyword id="KW-0963">Cytoplasm</keyword>
<keyword id="KW-0413">Isomerase</keyword>
<keyword id="KW-1185">Reference proteome</keyword>
<keyword id="KW-0697">Rotamase</keyword>
<proteinExistence type="inferred from homology"/>
<name>TIG_CAMHC</name>
<evidence type="ECO:0000255" key="1">
    <source>
        <dbReference type="HAMAP-Rule" id="MF_00303"/>
    </source>
</evidence>
<organism>
    <name type="scientific">Campylobacter hominis (strain ATCC BAA-381 / DSM 21671 / CCUG 45161 / LMG 19568 / NCTC 13146 / CH001A)</name>
    <dbReference type="NCBI Taxonomy" id="360107"/>
    <lineage>
        <taxon>Bacteria</taxon>
        <taxon>Pseudomonadati</taxon>
        <taxon>Campylobacterota</taxon>
        <taxon>Epsilonproteobacteria</taxon>
        <taxon>Campylobacterales</taxon>
        <taxon>Campylobacteraceae</taxon>
        <taxon>Campylobacter</taxon>
    </lineage>
</organism>
<gene>
    <name evidence="1" type="primary">tig</name>
    <name type="ordered locus">CHAB381_0016</name>
</gene>
<feature type="chain" id="PRO_1000022663" description="Trigger factor">
    <location>
        <begin position="1"/>
        <end position="437"/>
    </location>
</feature>
<feature type="domain" description="PPIase FKBP-type" evidence="1">
    <location>
        <begin position="164"/>
        <end position="249"/>
    </location>
</feature>
<protein>
    <recommendedName>
        <fullName evidence="1">Trigger factor</fullName>
        <shortName evidence="1">TF</shortName>
        <ecNumber evidence="1">5.2.1.8</ecNumber>
    </recommendedName>
    <alternativeName>
        <fullName evidence="1">PPIase</fullName>
    </alternativeName>
</protein>
<dbReference type="EC" id="5.2.1.8" evidence="1"/>
<dbReference type="EMBL" id="CP000776">
    <property type="protein sequence ID" value="ABS51603.1"/>
    <property type="molecule type" value="Genomic_DNA"/>
</dbReference>
<dbReference type="RefSeq" id="WP_011991485.1">
    <property type="nucleotide sequence ID" value="NC_009714.1"/>
</dbReference>
<dbReference type="SMR" id="A7HZE7"/>
<dbReference type="STRING" id="360107.CHAB381_0016"/>
<dbReference type="KEGG" id="cha:CHAB381_0016"/>
<dbReference type="eggNOG" id="COG0544">
    <property type="taxonomic scope" value="Bacteria"/>
</dbReference>
<dbReference type="HOGENOM" id="CLU_033058_2_2_7"/>
<dbReference type="OrthoDB" id="9767721at2"/>
<dbReference type="Proteomes" id="UP000002407">
    <property type="component" value="Chromosome"/>
</dbReference>
<dbReference type="GO" id="GO:0005737">
    <property type="term" value="C:cytoplasm"/>
    <property type="evidence" value="ECO:0007669"/>
    <property type="project" value="UniProtKB-SubCell"/>
</dbReference>
<dbReference type="GO" id="GO:0003755">
    <property type="term" value="F:peptidyl-prolyl cis-trans isomerase activity"/>
    <property type="evidence" value="ECO:0007669"/>
    <property type="project" value="UniProtKB-UniRule"/>
</dbReference>
<dbReference type="GO" id="GO:0051301">
    <property type="term" value="P:cell division"/>
    <property type="evidence" value="ECO:0007669"/>
    <property type="project" value="UniProtKB-KW"/>
</dbReference>
<dbReference type="GO" id="GO:0006457">
    <property type="term" value="P:protein folding"/>
    <property type="evidence" value="ECO:0007669"/>
    <property type="project" value="UniProtKB-UniRule"/>
</dbReference>
<dbReference type="GO" id="GO:0015031">
    <property type="term" value="P:protein transport"/>
    <property type="evidence" value="ECO:0007669"/>
    <property type="project" value="UniProtKB-UniRule"/>
</dbReference>
<dbReference type="FunFam" id="3.10.50.40:FF:000001">
    <property type="entry name" value="Trigger factor"/>
    <property type="match status" value="1"/>
</dbReference>
<dbReference type="Gene3D" id="3.10.50.40">
    <property type="match status" value="1"/>
</dbReference>
<dbReference type="Gene3D" id="3.30.70.1050">
    <property type="entry name" value="Trigger factor ribosome-binding domain"/>
    <property type="match status" value="1"/>
</dbReference>
<dbReference type="Gene3D" id="1.10.3120.10">
    <property type="entry name" value="Trigger factor, C-terminal domain"/>
    <property type="match status" value="1"/>
</dbReference>
<dbReference type="HAMAP" id="MF_00303">
    <property type="entry name" value="Trigger_factor_Tig"/>
    <property type="match status" value="1"/>
</dbReference>
<dbReference type="InterPro" id="IPR046357">
    <property type="entry name" value="PPIase_dom_sf"/>
</dbReference>
<dbReference type="InterPro" id="IPR001179">
    <property type="entry name" value="PPIase_FKBP_dom"/>
</dbReference>
<dbReference type="InterPro" id="IPR005215">
    <property type="entry name" value="Trig_fac"/>
</dbReference>
<dbReference type="InterPro" id="IPR008880">
    <property type="entry name" value="Trigger_fac_C"/>
</dbReference>
<dbReference type="InterPro" id="IPR037041">
    <property type="entry name" value="Trigger_fac_C_sf"/>
</dbReference>
<dbReference type="InterPro" id="IPR008881">
    <property type="entry name" value="Trigger_fac_ribosome-bd_bac"/>
</dbReference>
<dbReference type="InterPro" id="IPR036611">
    <property type="entry name" value="Trigger_fac_ribosome-bd_sf"/>
</dbReference>
<dbReference type="InterPro" id="IPR027304">
    <property type="entry name" value="Trigger_fact/SurA_dom_sf"/>
</dbReference>
<dbReference type="NCBIfam" id="TIGR00115">
    <property type="entry name" value="tig"/>
    <property type="match status" value="1"/>
</dbReference>
<dbReference type="Pfam" id="PF00254">
    <property type="entry name" value="FKBP_C"/>
    <property type="match status" value="1"/>
</dbReference>
<dbReference type="Pfam" id="PF05698">
    <property type="entry name" value="Trigger_C"/>
    <property type="match status" value="1"/>
</dbReference>
<dbReference type="Pfam" id="PF05697">
    <property type="entry name" value="Trigger_N"/>
    <property type="match status" value="1"/>
</dbReference>
<dbReference type="PIRSF" id="PIRSF003095">
    <property type="entry name" value="Trigger_factor"/>
    <property type="match status" value="1"/>
</dbReference>
<dbReference type="SUPFAM" id="SSF54534">
    <property type="entry name" value="FKBP-like"/>
    <property type="match status" value="1"/>
</dbReference>
<dbReference type="SUPFAM" id="SSF109998">
    <property type="entry name" value="Triger factor/SurA peptide-binding domain-like"/>
    <property type="match status" value="1"/>
</dbReference>
<dbReference type="SUPFAM" id="SSF102735">
    <property type="entry name" value="Trigger factor ribosome-binding domain"/>
    <property type="match status" value="1"/>
</dbReference>
<dbReference type="PROSITE" id="PS50059">
    <property type="entry name" value="FKBP_PPIASE"/>
    <property type="match status" value="1"/>
</dbReference>
<comment type="function">
    <text evidence="1">Involved in protein export. Acts as a chaperone by maintaining the newly synthesized protein in an open conformation. Functions as a peptidyl-prolyl cis-trans isomerase.</text>
</comment>
<comment type="catalytic activity">
    <reaction evidence="1">
        <text>[protein]-peptidylproline (omega=180) = [protein]-peptidylproline (omega=0)</text>
        <dbReference type="Rhea" id="RHEA:16237"/>
        <dbReference type="Rhea" id="RHEA-COMP:10747"/>
        <dbReference type="Rhea" id="RHEA-COMP:10748"/>
        <dbReference type="ChEBI" id="CHEBI:83833"/>
        <dbReference type="ChEBI" id="CHEBI:83834"/>
        <dbReference type="EC" id="5.2.1.8"/>
    </reaction>
</comment>
<comment type="subcellular location">
    <subcellularLocation>
        <location>Cytoplasm</location>
    </subcellularLocation>
    <text evidence="1">About half TF is bound to the ribosome near the polypeptide exit tunnel while the other half is free in the cytoplasm.</text>
</comment>
<comment type="domain">
    <text evidence="1">Consists of 3 domains; the N-terminus binds the ribosome, the middle domain has PPIase activity, while the C-terminus has intrinsic chaperone activity on its own.</text>
</comment>
<comment type="similarity">
    <text evidence="1">Belongs to the FKBP-type PPIase family. Tig subfamily.</text>
</comment>
<sequence>MEISAKLTNSANALASTKIPTASINEKVNELAKQTAKKVRIDGFRPGKAPVAAVLKRYKKELEDDAKNDIFRNFVDESLKILGKEKNEILGEPIFSKYEEKDGIIDVEMKMSFRPEVKIDGYEKFIPEFATPRVTKKEIDEKINEFLLMIAPLEKSDKEVLEKGDFAKFDFEGFVDDKPFDGGKAQDYVLEIGSGRFIPGFEDGMLGMKIDEERDIKVKFPENYQAENLAGKDAIFKVKLHEIQCKKIGELDDETLKRLMPGEKEPSKEKFEAQIKEQIRADKMAKLINEELKPKFADIIVENFIFDMPEIILEQEIDLQFRNAWGTFSKEEIENFRKDKDALTKKRDEFRDEAVKSVKMTFLIDEIAKDRKIQVSDQELVSAVYMEAYRYGMDPKKHLEEYRTNGYLPVVKMALLEEKLFNDIFSKDKKSEKTEEK</sequence>
<accession>A7HZE7</accession>